<accession>Q9D0J8</accession>
<comment type="function">
    <text evidence="1">Parathymosin may mediate immune function by blocking the effect of prothymosin alpha which confers resistance to certain opportunistic infections.</text>
</comment>
<comment type="similarity">
    <text evidence="5">Belongs to the pro/parathymosin family.</text>
</comment>
<dbReference type="EMBL" id="AK011360">
    <property type="protein sequence ID" value="BAB27568.1"/>
    <property type="molecule type" value="mRNA"/>
</dbReference>
<dbReference type="EMBL" id="BC052699">
    <property type="protein sequence ID" value="AAH52699.1"/>
    <property type="molecule type" value="mRNA"/>
</dbReference>
<dbReference type="CCDS" id="CCDS39630.1"/>
<dbReference type="RefSeq" id="NP_081264.1">
    <property type="nucleotide sequence ID" value="NM_026988.3"/>
</dbReference>
<dbReference type="SMR" id="Q9D0J8"/>
<dbReference type="BioGRID" id="213291">
    <property type="interactions" value="2"/>
</dbReference>
<dbReference type="FunCoup" id="Q9D0J8">
    <property type="interactions" value="83"/>
</dbReference>
<dbReference type="IntAct" id="Q9D0J8">
    <property type="interactions" value="1"/>
</dbReference>
<dbReference type="STRING" id="10090.ENSMUSP00000032216"/>
<dbReference type="iPTMnet" id="Q9D0J8"/>
<dbReference type="PhosphoSitePlus" id="Q9D0J8"/>
<dbReference type="jPOST" id="Q9D0J8"/>
<dbReference type="PaxDb" id="10090-ENSMUSP00000032216"/>
<dbReference type="PeptideAtlas" id="Q9D0J8"/>
<dbReference type="ProteomicsDB" id="301935"/>
<dbReference type="Pumba" id="Q9D0J8"/>
<dbReference type="TopDownProteomics" id="Q9D0J8"/>
<dbReference type="DNASU" id="69202"/>
<dbReference type="Ensembl" id="ENSMUST00000032216.7">
    <property type="protein sequence ID" value="ENSMUSP00000032216.7"/>
    <property type="gene ID" value="ENSMUSG00000030122.14"/>
</dbReference>
<dbReference type="GeneID" id="69202"/>
<dbReference type="KEGG" id="mmu:69202"/>
<dbReference type="UCSC" id="uc009dsm.2">
    <property type="organism name" value="mouse"/>
</dbReference>
<dbReference type="AGR" id="MGI:1916452"/>
<dbReference type="CTD" id="5763"/>
<dbReference type="MGI" id="MGI:1916452">
    <property type="gene designation" value="Ptms"/>
</dbReference>
<dbReference type="VEuPathDB" id="HostDB:ENSMUSG00000030122"/>
<dbReference type="eggNOG" id="ENOG502SSXW">
    <property type="taxonomic scope" value="Eukaryota"/>
</dbReference>
<dbReference type="GeneTree" id="ENSGT01100000264105"/>
<dbReference type="HOGENOM" id="CLU_087174_1_0_1"/>
<dbReference type="InParanoid" id="Q9D0J8"/>
<dbReference type="OMA" id="HEEKSAH"/>
<dbReference type="BioGRID-ORCS" id="69202">
    <property type="hits" value="6 hits in 79 CRISPR screens"/>
</dbReference>
<dbReference type="ChiTaRS" id="Ptms">
    <property type="organism name" value="mouse"/>
</dbReference>
<dbReference type="PRO" id="PR:Q9D0J8"/>
<dbReference type="Proteomes" id="UP000000589">
    <property type="component" value="Chromosome 6"/>
</dbReference>
<dbReference type="RNAct" id="Q9D0J8">
    <property type="molecule type" value="protein"/>
</dbReference>
<dbReference type="Bgee" id="ENSMUSG00000030122">
    <property type="expression patterns" value="Expressed in embryonic brain and 260 other cell types or tissues"/>
</dbReference>
<dbReference type="GO" id="GO:0002376">
    <property type="term" value="P:immune system process"/>
    <property type="evidence" value="ECO:0007669"/>
    <property type="project" value="UniProtKB-KW"/>
</dbReference>
<dbReference type="InterPro" id="IPR004931">
    <property type="entry name" value="Pro/parathymosin"/>
</dbReference>
<dbReference type="PANTHER" id="PTHR22745:SF3">
    <property type="entry name" value="PARATHYMOSIN"/>
    <property type="match status" value="1"/>
</dbReference>
<dbReference type="PANTHER" id="PTHR22745">
    <property type="entry name" value="PROTHYMOSIN ALPHA"/>
    <property type="match status" value="1"/>
</dbReference>
<dbReference type="Pfam" id="PF03247">
    <property type="entry name" value="Prothymosin"/>
    <property type="match status" value="1"/>
</dbReference>
<feature type="initiator methionine" description="Removed" evidence="3">
    <location>
        <position position="1"/>
    </location>
</feature>
<feature type="chain" id="PRO_0000191633" description="Parathymosin">
    <location>
        <begin position="2"/>
        <end position="101"/>
    </location>
</feature>
<feature type="region of interest" description="Disordered" evidence="4">
    <location>
        <begin position="1"/>
        <end position="101"/>
    </location>
</feature>
<feature type="compositionally biased region" description="Basic and acidic residues" evidence="4">
    <location>
        <begin position="13"/>
        <end position="37"/>
    </location>
</feature>
<feature type="compositionally biased region" description="Acidic residues" evidence="4">
    <location>
        <begin position="38"/>
        <end position="74"/>
    </location>
</feature>
<feature type="modified residue" description="N-acetylserine" evidence="3">
    <location>
        <position position="2"/>
    </location>
</feature>
<feature type="modified residue" description="Phosphoserine" evidence="3">
    <location>
        <position position="2"/>
    </location>
</feature>
<feature type="modified residue" description="N6-acetyllysine" evidence="3">
    <location>
        <position position="4"/>
    </location>
</feature>
<feature type="modified residue" description="Phosphoserine" evidence="6">
    <location>
        <position position="5"/>
    </location>
</feature>
<feature type="modified residue" description="Phosphoserine" evidence="6">
    <location>
        <position position="13"/>
    </location>
</feature>
<feature type="modified residue" description="N6-acetyllysine" evidence="7">
    <location>
        <position position="15"/>
    </location>
</feature>
<feature type="modified residue" description="Phosphothreonine" evidence="2">
    <location>
        <position position="52"/>
    </location>
</feature>
<feature type="modified residue" description="N6-acetyllysine" evidence="3">
    <location>
        <position position="91"/>
    </location>
</feature>
<evidence type="ECO:0000250" key="1"/>
<evidence type="ECO:0000250" key="2">
    <source>
        <dbReference type="UniProtKB" id="P04550"/>
    </source>
</evidence>
<evidence type="ECO:0000250" key="3">
    <source>
        <dbReference type="UniProtKB" id="P20962"/>
    </source>
</evidence>
<evidence type="ECO:0000256" key="4">
    <source>
        <dbReference type="SAM" id="MobiDB-lite"/>
    </source>
</evidence>
<evidence type="ECO:0000305" key="5"/>
<evidence type="ECO:0007744" key="6">
    <source>
    </source>
</evidence>
<evidence type="ECO:0007744" key="7">
    <source>
    </source>
</evidence>
<name>PTMS_MOUSE</name>
<organism>
    <name type="scientific">Mus musculus</name>
    <name type="common">Mouse</name>
    <dbReference type="NCBI Taxonomy" id="10090"/>
    <lineage>
        <taxon>Eukaryota</taxon>
        <taxon>Metazoa</taxon>
        <taxon>Chordata</taxon>
        <taxon>Craniata</taxon>
        <taxon>Vertebrata</taxon>
        <taxon>Euteleostomi</taxon>
        <taxon>Mammalia</taxon>
        <taxon>Eutheria</taxon>
        <taxon>Euarchontoglires</taxon>
        <taxon>Glires</taxon>
        <taxon>Rodentia</taxon>
        <taxon>Myomorpha</taxon>
        <taxon>Muroidea</taxon>
        <taxon>Muridae</taxon>
        <taxon>Murinae</taxon>
        <taxon>Mus</taxon>
        <taxon>Mus</taxon>
    </lineage>
</organism>
<gene>
    <name type="primary">Ptms</name>
</gene>
<protein>
    <recommendedName>
        <fullName>Parathymosin</fullName>
    </recommendedName>
</protein>
<keyword id="KW-0007">Acetylation</keyword>
<keyword id="KW-0391">Immunity</keyword>
<keyword id="KW-0597">Phosphoprotein</keyword>
<keyword id="KW-1185">Reference proteome</keyword>
<reference key="1">
    <citation type="journal article" date="2005" name="Science">
        <title>The transcriptional landscape of the mammalian genome.</title>
        <authorList>
            <person name="Carninci P."/>
            <person name="Kasukawa T."/>
            <person name="Katayama S."/>
            <person name="Gough J."/>
            <person name="Frith M.C."/>
            <person name="Maeda N."/>
            <person name="Oyama R."/>
            <person name="Ravasi T."/>
            <person name="Lenhard B."/>
            <person name="Wells C."/>
            <person name="Kodzius R."/>
            <person name="Shimokawa K."/>
            <person name="Bajic V.B."/>
            <person name="Brenner S.E."/>
            <person name="Batalov S."/>
            <person name="Forrest A.R."/>
            <person name="Zavolan M."/>
            <person name="Davis M.J."/>
            <person name="Wilming L.G."/>
            <person name="Aidinis V."/>
            <person name="Allen J.E."/>
            <person name="Ambesi-Impiombato A."/>
            <person name="Apweiler R."/>
            <person name="Aturaliya R.N."/>
            <person name="Bailey T.L."/>
            <person name="Bansal M."/>
            <person name="Baxter L."/>
            <person name="Beisel K.W."/>
            <person name="Bersano T."/>
            <person name="Bono H."/>
            <person name="Chalk A.M."/>
            <person name="Chiu K.P."/>
            <person name="Choudhary V."/>
            <person name="Christoffels A."/>
            <person name="Clutterbuck D.R."/>
            <person name="Crowe M.L."/>
            <person name="Dalla E."/>
            <person name="Dalrymple B.P."/>
            <person name="de Bono B."/>
            <person name="Della Gatta G."/>
            <person name="di Bernardo D."/>
            <person name="Down T."/>
            <person name="Engstrom P."/>
            <person name="Fagiolini M."/>
            <person name="Faulkner G."/>
            <person name="Fletcher C.F."/>
            <person name="Fukushima T."/>
            <person name="Furuno M."/>
            <person name="Futaki S."/>
            <person name="Gariboldi M."/>
            <person name="Georgii-Hemming P."/>
            <person name="Gingeras T.R."/>
            <person name="Gojobori T."/>
            <person name="Green R.E."/>
            <person name="Gustincich S."/>
            <person name="Harbers M."/>
            <person name="Hayashi Y."/>
            <person name="Hensch T.K."/>
            <person name="Hirokawa N."/>
            <person name="Hill D."/>
            <person name="Huminiecki L."/>
            <person name="Iacono M."/>
            <person name="Ikeo K."/>
            <person name="Iwama A."/>
            <person name="Ishikawa T."/>
            <person name="Jakt M."/>
            <person name="Kanapin A."/>
            <person name="Katoh M."/>
            <person name="Kawasawa Y."/>
            <person name="Kelso J."/>
            <person name="Kitamura H."/>
            <person name="Kitano H."/>
            <person name="Kollias G."/>
            <person name="Krishnan S.P."/>
            <person name="Kruger A."/>
            <person name="Kummerfeld S.K."/>
            <person name="Kurochkin I.V."/>
            <person name="Lareau L.F."/>
            <person name="Lazarevic D."/>
            <person name="Lipovich L."/>
            <person name="Liu J."/>
            <person name="Liuni S."/>
            <person name="McWilliam S."/>
            <person name="Madan Babu M."/>
            <person name="Madera M."/>
            <person name="Marchionni L."/>
            <person name="Matsuda H."/>
            <person name="Matsuzawa S."/>
            <person name="Miki H."/>
            <person name="Mignone F."/>
            <person name="Miyake S."/>
            <person name="Morris K."/>
            <person name="Mottagui-Tabar S."/>
            <person name="Mulder N."/>
            <person name="Nakano N."/>
            <person name="Nakauchi H."/>
            <person name="Ng P."/>
            <person name="Nilsson R."/>
            <person name="Nishiguchi S."/>
            <person name="Nishikawa S."/>
            <person name="Nori F."/>
            <person name="Ohara O."/>
            <person name="Okazaki Y."/>
            <person name="Orlando V."/>
            <person name="Pang K.C."/>
            <person name="Pavan W.J."/>
            <person name="Pavesi G."/>
            <person name="Pesole G."/>
            <person name="Petrovsky N."/>
            <person name="Piazza S."/>
            <person name="Reed J."/>
            <person name="Reid J.F."/>
            <person name="Ring B.Z."/>
            <person name="Ringwald M."/>
            <person name="Rost B."/>
            <person name="Ruan Y."/>
            <person name="Salzberg S.L."/>
            <person name="Sandelin A."/>
            <person name="Schneider C."/>
            <person name="Schoenbach C."/>
            <person name="Sekiguchi K."/>
            <person name="Semple C.A."/>
            <person name="Seno S."/>
            <person name="Sessa L."/>
            <person name="Sheng Y."/>
            <person name="Shibata Y."/>
            <person name="Shimada H."/>
            <person name="Shimada K."/>
            <person name="Silva D."/>
            <person name="Sinclair B."/>
            <person name="Sperling S."/>
            <person name="Stupka E."/>
            <person name="Sugiura K."/>
            <person name="Sultana R."/>
            <person name="Takenaka Y."/>
            <person name="Taki K."/>
            <person name="Tammoja K."/>
            <person name="Tan S.L."/>
            <person name="Tang S."/>
            <person name="Taylor M.S."/>
            <person name="Tegner J."/>
            <person name="Teichmann S.A."/>
            <person name="Ueda H.R."/>
            <person name="van Nimwegen E."/>
            <person name="Verardo R."/>
            <person name="Wei C.L."/>
            <person name="Yagi K."/>
            <person name="Yamanishi H."/>
            <person name="Zabarovsky E."/>
            <person name="Zhu S."/>
            <person name="Zimmer A."/>
            <person name="Hide W."/>
            <person name="Bult C."/>
            <person name="Grimmond S.M."/>
            <person name="Teasdale R.D."/>
            <person name="Liu E.T."/>
            <person name="Brusic V."/>
            <person name="Quackenbush J."/>
            <person name="Wahlestedt C."/>
            <person name="Mattick J.S."/>
            <person name="Hume D.A."/>
            <person name="Kai C."/>
            <person name="Sasaki D."/>
            <person name="Tomaru Y."/>
            <person name="Fukuda S."/>
            <person name="Kanamori-Katayama M."/>
            <person name="Suzuki M."/>
            <person name="Aoki J."/>
            <person name="Arakawa T."/>
            <person name="Iida J."/>
            <person name="Imamura K."/>
            <person name="Itoh M."/>
            <person name="Kato T."/>
            <person name="Kawaji H."/>
            <person name="Kawagashira N."/>
            <person name="Kawashima T."/>
            <person name="Kojima M."/>
            <person name="Kondo S."/>
            <person name="Konno H."/>
            <person name="Nakano K."/>
            <person name="Ninomiya N."/>
            <person name="Nishio T."/>
            <person name="Okada M."/>
            <person name="Plessy C."/>
            <person name="Shibata K."/>
            <person name="Shiraki T."/>
            <person name="Suzuki S."/>
            <person name="Tagami M."/>
            <person name="Waki K."/>
            <person name="Watahiki A."/>
            <person name="Okamura-Oho Y."/>
            <person name="Suzuki H."/>
            <person name="Kawai J."/>
            <person name="Hayashizaki Y."/>
        </authorList>
    </citation>
    <scope>NUCLEOTIDE SEQUENCE [LARGE SCALE MRNA]</scope>
    <source>
        <strain>C57BL/6J</strain>
    </source>
</reference>
<reference key="2">
    <citation type="journal article" date="2004" name="Genome Res.">
        <title>The status, quality, and expansion of the NIH full-length cDNA project: the Mammalian Gene Collection (MGC).</title>
        <authorList>
            <consortium name="The MGC Project Team"/>
        </authorList>
    </citation>
    <scope>NUCLEOTIDE SEQUENCE [LARGE SCALE MRNA]</scope>
    <source>
        <strain>C57BL/6J</strain>
    </source>
</reference>
<reference key="3">
    <citation type="journal article" date="2010" name="Cell">
        <title>A tissue-specific atlas of mouse protein phosphorylation and expression.</title>
        <authorList>
            <person name="Huttlin E.L."/>
            <person name="Jedrychowski M.P."/>
            <person name="Elias J.E."/>
            <person name="Goswami T."/>
            <person name="Rad R."/>
            <person name="Beausoleil S.A."/>
            <person name="Villen J."/>
            <person name="Haas W."/>
            <person name="Sowa M.E."/>
            <person name="Gygi S.P."/>
        </authorList>
    </citation>
    <scope>PHOSPHORYLATION [LARGE SCALE ANALYSIS] AT SER-5 AND SER-13</scope>
    <scope>IDENTIFICATION BY MASS SPECTROMETRY [LARGE SCALE ANALYSIS]</scope>
    <source>
        <tissue>Brown adipose tissue</tissue>
        <tissue>Heart</tissue>
        <tissue>Kidney</tissue>
        <tissue>Liver</tissue>
        <tissue>Lung</tissue>
        <tissue>Pancreas</tissue>
        <tissue>Spleen</tissue>
        <tissue>Testis</tissue>
    </source>
</reference>
<reference key="4">
    <citation type="journal article" date="2013" name="Mol. Cell">
        <title>SIRT5-mediated lysine desuccinylation impacts diverse metabolic pathways.</title>
        <authorList>
            <person name="Park J."/>
            <person name="Chen Y."/>
            <person name="Tishkoff D.X."/>
            <person name="Peng C."/>
            <person name="Tan M."/>
            <person name="Dai L."/>
            <person name="Xie Z."/>
            <person name="Zhang Y."/>
            <person name="Zwaans B.M."/>
            <person name="Skinner M.E."/>
            <person name="Lombard D.B."/>
            <person name="Zhao Y."/>
        </authorList>
    </citation>
    <scope>ACETYLATION [LARGE SCALE ANALYSIS] AT LYS-15</scope>
    <scope>IDENTIFICATION BY MASS SPECTROMETRY [LARGE SCALE ANALYSIS]</scope>
    <source>
        <tissue>Embryonic fibroblast</tissue>
    </source>
</reference>
<proteinExistence type="evidence at protein level"/>
<sequence>MSEKSVEAAAELSAKDLKEKKDKVEEKAGRKERKKEVVEEEENGAEEEEEETAEDGEDDDEGDEEDEEEEEEDEGPVRKRTAEEEDEADPKRQKTENGASA</sequence>